<evidence type="ECO:0000255" key="1">
    <source>
        <dbReference type="HAMAP-Rule" id="MF_00154"/>
    </source>
</evidence>
<dbReference type="EC" id="2.5.1.141" evidence="1"/>
<dbReference type="EMBL" id="CP000113">
    <property type="protein sequence ID" value="ABF86545.1"/>
    <property type="molecule type" value="Genomic_DNA"/>
</dbReference>
<dbReference type="SMR" id="Q1D1K4"/>
<dbReference type="STRING" id="246197.MXAN_5318"/>
<dbReference type="EnsemblBacteria" id="ABF86545">
    <property type="protein sequence ID" value="ABF86545"/>
    <property type="gene ID" value="MXAN_5318"/>
</dbReference>
<dbReference type="GeneID" id="41362587"/>
<dbReference type="KEGG" id="mxa:MXAN_5318"/>
<dbReference type="eggNOG" id="COG0109">
    <property type="taxonomic scope" value="Bacteria"/>
</dbReference>
<dbReference type="HOGENOM" id="CLU_029631_0_0_7"/>
<dbReference type="OrthoDB" id="9814417at2"/>
<dbReference type="UniPathway" id="UPA00834">
    <property type="reaction ID" value="UER00712"/>
</dbReference>
<dbReference type="Proteomes" id="UP000002402">
    <property type="component" value="Chromosome"/>
</dbReference>
<dbReference type="GO" id="GO:0005886">
    <property type="term" value="C:plasma membrane"/>
    <property type="evidence" value="ECO:0007669"/>
    <property type="project" value="UniProtKB-SubCell"/>
</dbReference>
<dbReference type="GO" id="GO:0008495">
    <property type="term" value="F:protoheme IX farnesyltransferase activity"/>
    <property type="evidence" value="ECO:0007669"/>
    <property type="project" value="UniProtKB-UniRule"/>
</dbReference>
<dbReference type="GO" id="GO:0048034">
    <property type="term" value="P:heme O biosynthetic process"/>
    <property type="evidence" value="ECO:0007669"/>
    <property type="project" value="UniProtKB-UniRule"/>
</dbReference>
<dbReference type="CDD" id="cd13957">
    <property type="entry name" value="PT_UbiA_Cox10"/>
    <property type="match status" value="1"/>
</dbReference>
<dbReference type="Gene3D" id="1.10.357.140">
    <property type="entry name" value="UbiA prenyltransferase"/>
    <property type="match status" value="1"/>
</dbReference>
<dbReference type="HAMAP" id="MF_00154">
    <property type="entry name" value="CyoE_CtaB"/>
    <property type="match status" value="1"/>
</dbReference>
<dbReference type="InterPro" id="IPR006369">
    <property type="entry name" value="Protohaem_IX_farnesylTrfase"/>
</dbReference>
<dbReference type="InterPro" id="IPR000537">
    <property type="entry name" value="UbiA_prenyltransferase"/>
</dbReference>
<dbReference type="InterPro" id="IPR044878">
    <property type="entry name" value="UbiA_sf"/>
</dbReference>
<dbReference type="NCBIfam" id="TIGR01473">
    <property type="entry name" value="cyoE_ctaB"/>
    <property type="match status" value="1"/>
</dbReference>
<dbReference type="PANTHER" id="PTHR43448">
    <property type="entry name" value="PROTOHEME IX FARNESYLTRANSFERASE, MITOCHONDRIAL"/>
    <property type="match status" value="1"/>
</dbReference>
<dbReference type="PANTHER" id="PTHR43448:SF2">
    <property type="entry name" value="PROTOHEME IX FARNESYLTRANSFERASE, MITOCHONDRIAL"/>
    <property type="match status" value="1"/>
</dbReference>
<dbReference type="Pfam" id="PF01040">
    <property type="entry name" value="UbiA"/>
    <property type="match status" value="1"/>
</dbReference>
<feature type="chain" id="PRO_0000327094" description="Protoheme IX farnesyltransferase">
    <location>
        <begin position="1"/>
        <end position="294"/>
    </location>
</feature>
<feature type="transmembrane region" description="Helical" evidence="1">
    <location>
        <begin position="25"/>
        <end position="45"/>
    </location>
</feature>
<feature type="transmembrane region" description="Helical" evidence="1">
    <location>
        <begin position="48"/>
        <end position="68"/>
    </location>
</feature>
<feature type="transmembrane region" description="Helical" evidence="1">
    <location>
        <begin position="92"/>
        <end position="112"/>
    </location>
</feature>
<feature type="transmembrane region" description="Helical" evidence="1">
    <location>
        <begin position="115"/>
        <end position="135"/>
    </location>
</feature>
<feature type="transmembrane region" description="Helical" evidence="1">
    <location>
        <begin position="141"/>
        <end position="161"/>
    </location>
</feature>
<feature type="transmembrane region" description="Helical" evidence="1">
    <location>
        <begin position="170"/>
        <end position="190"/>
    </location>
</feature>
<feature type="transmembrane region" description="Helical" evidence="1">
    <location>
        <begin position="216"/>
        <end position="236"/>
    </location>
</feature>
<feature type="transmembrane region" description="Helical" evidence="1">
    <location>
        <begin position="240"/>
        <end position="260"/>
    </location>
</feature>
<feature type="transmembrane region" description="Helical" evidence="1">
    <location>
        <begin position="272"/>
        <end position="292"/>
    </location>
</feature>
<accession>Q1D1K4</accession>
<proteinExistence type="inferred from homology"/>
<organism>
    <name type="scientific">Myxococcus xanthus (strain DK1622)</name>
    <dbReference type="NCBI Taxonomy" id="246197"/>
    <lineage>
        <taxon>Bacteria</taxon>
        <taxon>Pseudomonadati</taxon>
        <taxon>Myxococcota</taxon>
        <taxon>Myxococcia</taxon>
        <taxon>Myxococcales</taxon>
        <taxon>Cystobacterineae</taxon>
        <taxon>Myxococcaceae</taxon>
        <taxon>Myxococcus</taxon>
    </lineage>
</organism>
<comment type="function">
    <text evidence="1">Converts heme B (protoheme IX) to heme O by substitution of the vinyl group on carbon 2 of heme B porphyrin ring with a hydroxyethyl farnesyl side group.</text>
</comment>
<comment type="catalytic activity">
    <reaction evidence="1">
        <text>heme b + (2E,6E)-farnesyl diphosphate + H2O = Fe(II)-heme o + diphosphate</text>
        <dbReference type="Rhea" id="RHEA:28070"/>
        <dbReference type="ChEBI" id="CHEBI:15377"/>
        <dbReference type="ChEBI" id="CHEBI:33019"/>
        <dbReference type="ChEBI" id="CHEBI:60344"/>
        <dbReference type="ChEBI" id="CHEBI:60530"/>
        <dbReference type="ChEBI" id="CHEBI:175763"/>
        <dbReference type="EC" id="2.5.1.141"/>
    </reaction>
</comment>
<comment type="pathway">
    <text evidence="1">Porphyrin-containing compound metabolism; heme O biosynthesis; heme O from protoheme: step 1/1.</text>
</comment>
<comment type="subcellular location">
    <subcellularLocation>
        <location evidence="1">Cell inner membrane</location>
        <topology evidence="1">Multi-pass membrane protein</topology>
    </subcellularLocation>
</comment>
<comment type="miscellaneous">
    <text evidence="1">Carbon 2 of the heme B porphyrin ring is defined according to the Fischer nomenclature.</text>
</comment>
<comment type="similarity">
    <text evidence="1">Belongs to the UbiA prenyltransferase family. Protoheme IX farnesyltransferase subfamily.</text>
</comment>
<gene>
    <name evidence="1" type="primary">ctaB</name>
    <name type="ordered locus">MXAN_5318</name>
</gene>
<name>COXX_MYXXD</name>
<protein>
    <recommendedName>
        <fullName evidence="1">Protoheme IX farnesyltransferase</fullName>
        <ecNumber evidence="1">2.5.1.141</ecNumber>
    </recommendedName>
    <alternativeName>
        <fullName evidence="1">Heme B farnesyltransferase</fullName>
    </alternativeName>
    <alternativeName>
        <fullName evidence="1">Heme O synthase</fullName>
    </alternativeName>
</protein>
<sequence>MNARAESLPTVASDLISLTKPRLSSLVLVTAAGGMWLAPGHMGAVNALVTLLATAGTVGAANALNCYWERHSDQFMDRTRNRPLPSGRMEPAVALWFGISLAAVSLPALALGANVLTAALGLVALLSYVLAYTPLKARTSAAMLVGGVPGALPPLMGWTAVTNQMDVGGFSLFAIMFLWQMPHFIAIALFRKEEYRAAGLTSVPLERGDESSRAQVVLYLVALIPMTLLPFQLHIAGAWYLAAAVLLGLSFLGLGAWGFFRRLGNTWARQTFFFSLIYLTGLFAALALDRVPRE</sequence>
<reference key="1">
    <citation type="journal article" date="2006" name="Proc. Natl. Acad. Sci. U.S.A.">
        <title>Evolution of sensory complexity recorded in a myxobacterial genome.</title>
        <authorList>
            <person name="Goldman B.S."/>
            <person name="Nierman W.C."/>
            <person name="Kaiser D."/>
            <person name="Slater S.C."/>
            <person name="Durkin A.S."/>
            <person name="Eisen J.A."/>
            <person name="Ronning C.M."/>
            <person name="Barbazuk W.B."/>
            <person name="Blanchard M."/>
            <person name="Field C."/>
            <person name="Halling C."/>
            <person name="Hinkle G."/>
            <person name="Iartchuk O."/>
            <person name="Kim H.S."/>
            <person name="Mackenzie C."/>
            <person name="Madupu R."/>
            <person name="Miller N."/>
            <person name="Shvartsbeyn A."/>
            <person name="Sullivan S.A."/>
            <person name="Vaudin M."/>
            <person name="Wiegand R."/>
            <person name="Kaplan H.B."/>
        </authorList>
    </citation>
    <scope>NUCLEOTIDE SEQUENCE [LARGE SCALE GENOMIC DNA]</scope>
    <source>
        <strain>DK1622</strain>
    </source>
</reference>
<keyword id="KW-0997">Cell inner membrane</keyword>
<keyword id="KW-1003">Cell membrane</keyword>
<keyword id="KW-0350">Heme biosynthesis</keyword>
<keyword id="KW-0472">Membrane</keyword>
<keyword id="KW-1185">Reference proteome</keyword>
<keyword id="KW-0808">Transferase</keyword>
<keyword id="KW-0812">Transmembrane</keyword>
<keyword id="KW-1133">Transmembrane helix</keyword>